<reference key="1">
    <citation type="journal article" date="1993" name="Nucleic Acids Res.">
        <title>Primary structure of Trichoderma harzianum ribosomal protein L32.</title>
        <authorList>
            <person name="Lora J.M."/>
            <person name="Garcia I."/>
            <person name="Benitez T."/>
            <person name="Llobell A."/>
            <person name="Pintor-Toro J.A."/>
        </authorList>
    </citation>
    <scope>NUCLEOTIDE SEQUENCE [MRNA]</scope>
</reference>
<reference key="2">
    <citation type="unpublished observations" date="1994-01">
        <authorList>
            <person name="Bairoch A."/>
        </authorList>
    </citation>
    <scope>IDENTIFICATION OF PROBABLE FRAMESHIFT</scope>
</reference>
<comment type="similarity">
    <text evidence="2">Belongs to the eukaryotic ribosomal protein eL32 family.</text>
</comment>
<comment type="sequence caution" evidence="2">
    <conflict type="frameshift">
        <sequence resource="EMBL-CDS" id="CAA50729"/>
    </conflict>
</comment>
<name>RL32_TRIHA</name>
<evidence type="ECO:0000256" key="1">
    <source>
        <dbReference type="SAM" id="MobiDB-lite"/>
    </source>
</evidence>
<evidence type="ECO:0000305" key="2"/>
<feature type="chain" id="PRO_0000131120" description="Large ribosomal subunit protein eL32">
    <location>
        <begin position="1"/>
        <end position="137"/>
    </location>
</feature>
<feature type="region of interest" description="Disordered" evidence="1">
    <location>
        <begin position="95"/>
        <end position="137"/>
    </location>
</feature>
<feature type="compositionally biased region" description="Basic residues" evidence="1">
    <location>
        <begin position="123"/>
        <end position="137"/>
    </location>
</feature>
<dbReference type="EMBL" id="X71914">
    <property type="protein sequence ID" value="CAA50729.1"/>
    <property type="status" value="ALT_FRAME"/>
    <property type="molecule type" value="mRNA"/>
</dbReference>
<dbReference type="PIR" id="S34860">
    <property type="entry name" value="S34860"/>
</dbReference>
<dbReference type="SMR" id="P34040"/>
<dbReference type="GO" id="GO:0022625">
    <property type="term" value="C:cytosolic large ribosomal subunit"/>
    <property type="evidence" value="ECO:0007669"/>
    <property type="project" value="TreeGrafter"/>
</dbReference>
<dbReference type="GO" id="GO:0003735">
    <property type="term" value="F:structural constituent of ribosome"/>
    <property type="evidence" value="ECO:0007669"/>
    <property type="project" value="InterPro"/>
</dbReference>
<dbReference type="GO" id="GO:0006412">
    <property type="term" value="P:translation"/>
    <property type="evidence" value="ECO:0007669"/>
    <property type="project" value="InterPro"/>
</dbReference>
<dbReference type="CDD" id="cd00513">
    <property type="entry name" value="Ribosomal_L32_L32e"/>
    <property type="match status" value="1"/>
</dbReference>
<dbReference type="InterPro" id="IPR001515">
    <property type="entry name" value="Ribosomal_eL32"/>
</dbReference>
<dbReference type="InterPro" id="IPR018263">
    <property type="entry name" value="Ribosomal_eL32_CS"/>
</dbReference>
<dbReference type="InterPro" id="IPR036351">
    <property type="entry name" value="Ribosomal_eL32_sf"/>
</dbReference>
<dbReference type="PANTHER" id="PTHR23413">
    <property type="entry name" value="60S RIBOSOMAL PROTEIN L32 AND DNA-DIRECTED RNA POLYMERASE II, SUBUNIT N"/>
    <property type="match status" value="1"/>
</dbReference>
<dbReference type="PANTHER" id="PTHR23413:SF1">
    <property type="entry name" value="RIBOSOMAL PROTEIN L32"/>
    <property type="match status" value="1"/>
</dbReference>
<dbReference type="Pfam" id="PF01655">
    <property type="entry name" value="Ribosomal_L32e"/>
    <property type="match status" value="1"/>
</dbReference>
<dbReference type="SMART" id="SM01393">
    <property type="entry name" value="Ribosomal_L32e"/>
    <property type="match status" value="1"/>
</dbReference>
<dbReference type="SUPFAM" id="SSF52042">
    <property type="entry name" value="Ribosomal protein L32e"/>
    <property type="match status" value="1"/>
</dbReference>
<dbReference type="PROSITE" id="PS00580">
    <property type="entry name" value="RIBOSOMAL_L32E"/>
    <property type="match status" value="1"/>
</dbReference>
<protein>
    <recommendedName>
        <fullName evidence="2">Large ribosomal subunit protein eL32</fullName>
    </recommendedName>
    <alternativeName>
        <fullName>60S ribosomal protein L32</fullName>
    </alternativeName>
</protein>
<gene>
    <name type="primary">rpl32</name>
</gene>
<proteinExistence type="evidence at transcript level"/>
<keyword id="KW-0687">Ribonucleoprotein</keyword>
<keyword id="KW-0689">Ribosomal protein</keyword>
<sequence length="137" mass="15445">MVAAKKHVPIVKKHKTTFARHQSDRFDRVGSSWRKPKGIDGRVRRRFRGTIRMPKIGYGSNKKTRFLTPSGHNAFLHNARTLSCAAGCSMQSTDPSAAEIATPVSSRKRIASSPARQADRCSRSRRSKFRPRRLRAS</sequence>
<organism>
    <name type="scientific">Trichoderma harzianum</name>
    <name type="common">Hypocrea lixii</name>
    <dbReference type="NCBI Taxonomy" id="5544"/>
    <lineage>
        <taxon>Eukaryota</taxon>
        <taxon>Fungi</taxon>
        <taxon>Dikarya</taxon>
        <taxon>Ascomycota</taxon>
        <taxon>Pezizomycotina</taxon>
        <taxon>Sordariomycetes</taxon>
        <taxon>Hypocreomycetidae</taxon>
        <taxon>Hypocreales</taxon>
        <taxon>Hypocreaceae</taxon>
        <taxon>Trichoderma</taxon>
    </lineage>
</organism>
<accession>P34040</accession>